<evidence type="ECO:0000255" key="1">
    <source>
        <dbReference type="HAMAP-Rule" id="MF_01960"/>
    </source>
</evidence>
<keyword id="KW-0031">Aminopeptidase</keyword>
<keyword id="KW-0378">Hydrolase</keyword>
<keyword id="KW-0645">Protease</keyword>
<comment type="function">
    <text evidence="1">Hydrolyzes N-terminal residues in D-amino acid-containing peptides.</text>
</comment>
<comment type="catalytic activity">
    <reaction evidence="1">
        <text>Release of an N-terminal D-amino acid from a peptide, Xaa-|-Yaa-, in which Xaa is preferably D-Ala, D-Ser or D-Thr. D-amino acid amides and methyl esters also are hydrolyzed, as is glycine amide.</text>
        <dbReference type="EC" id="3.4.11.19"/>
    </reaction>
</comment>
<comment type="activity regulation">
    <text evidence="1">Inhibited by beta-lactam compounds such as 6-aminopenicillic acid, 7-aminocephalosporanic acid, benzylpenicillin and ampicillin. Inhibited by p-chloromercuribenzoate.</text>
</comment>
<comment type="subunit">
    <text evidence="1">Homodimer.</text>
</comment>
<comment type="similarity">
    <text evidence="1">Belongs to the peptidase S12 family.</text>
</comment>
<feature type="chain" id="PRO_0000250694" description="D-aminopeptidase">
    <location>
        <begin position="1"/>
        <end position="518"/>
    </location>
</feature>
<feature type="region of interest" description="Important for specificity" evidence="1">
    <location>
        <begin position="477"/>
        <end position="487"/>
    </location>
</feature>
<feature type="active site" description="Nucleophile" evidence="1">
    <location>
        <position position="62"/>
    </location>
</feature>
<feature type="active site" description="Proton donor/acceptor" evidence="1">
    <location>
        <position position="65"/>
    </location>
</feature>
<feature type="binding site" evidence="1">
    <location>
        <position position="481"/>
    </location>
    <ligand>
        <name>substrate</name>
    </ligand>
</feature>
<organism>
    <name type="scientific">Brucella suis biovar 1 (strain 1330)</name>
    <dbReference type="NCBI Taxonomy" id="204722"/>
    <lineage>
        <taxon>Bacteria</taxon>
        <taxon>Pseudomonadati</taxon>
        <taxon>Pseudomonadota</taxon>
        <taxon>Alphaproteobacteria</taxon>
        <taxon>Hyphomicrobiales</taxon>
        <taxon>Brucellaceae</taxon>
        <taxon>Brucella/Ochrobactrum group</taxon>
        <taxon>Brucella</taxon>
    </lineage>
</organism>
<accession>Q8FV99</accession>
<accession>G0KDV6</accession>
<sequence>MPNIDLPTLEAFVHAIPQNYKGPGGAVAVVRNGEIVLRHAWGFADLAARKAMTPETRMPICSVSKQFTCAVLLDCIGEPEMLDSALAAYLDQFEDGRPAVRDLCNNQSGLRDYWALTVLCGAAPEGIFLPDQAQNLLRRLKTTHFAPGTHYSYCNGNFRILADLIEQHTGRSLADLLAERIFAPAAMKTAELIPDTALFNECTGYEGDTVRGFLPAINRIHWLGDAGICASLDDMIAWEQFIDRTRHDENGLYRRLSSPQTFADGAPAPYGFGLKFEETGGKRLTGHGGALRGWRCQRWHCADERISTIVMFNFEGNASDAALKMMNAALGIPPAKPVRAQANPGWFGSWLNPETGLVLSLEDAGGGRMKARFGTGPEIMDISGENEAQSSMTTLRRDGDMIHLARKDENLHLAMHRLKGEARQDIAGRYRSDELEADLLLVSEGGAIYGAFEGFLGKSDMYPLYAAGPDVWLLPVQRSMDAPSPGEWKLVFHRDAAGRITGVTVGCWLARGVEYKRL</sequence>
<proteinExistence type="inferred from homology"/>
<name>DAP_BRUSU</name>
<gene>
    <name evidence="1" type="primary">dap</name>
    <name type="ordered locus">BRA0947</name>
    <name type="ordered locus">BS1330_II0939</name>
</gene>
<dbReference type="EC" id="3.4.11.19" evidence="1"/>
<dbReference type="EMBL" id="AE014292">
    <property type="protein sequence ID" value="AAN34118.1"/>
    <property type="molecule type" value="Genomic_DNA"/>
</dbReference>
<dbReference type="EMBL" id="CP002998">
    <property type="protein sequence ID" value="AEM20394.1"/>
    <property type="molecule type" value="Genomic_DNA"/>
</dbReference>
<dbReference type="RefSeq" id="WP_002965700.1">
    <property type="nucleotide sequence ID" value="NZ_KN046805.1"/>
</dbReference>
<dbReference type="SMR" id="Q8FV99"/>
<dbReference type="MEROPS" id="S12.002"/>
<dbReference type="KEGG" id="bms:BRA0947"/>
<dbReference type="KEGG" id="bsi:BS1330_II0939"/>
<dbReference type="PATRIC" id="fig|204722.21.peg.346"/>
<dbReference type="HOGENOM" id="CLU_020027_0_4_5"/>
<dbReference type="PRO" id="PR:Q8FV99"/>
<dbReference type="Proteomes" id="UP000007104">
    <property type="component" value="Chromosome II"/>
</dbReference>
<dbReference type="GO" id="GO:0004177">
    <property type="term" value="F:aminopeptidase activity"/>
    <property type="evidence" value="ECO:0007669"/>
    <property type="project" value="UniProtKB-UniRule"/>
</dbReference>
<dbReference type="GO" id="GO:0006508">
    <property type="term" value="P:proteolysis"/>
    <property type="evidence" value="ECO:0007669"/>
    <property type="project" value="UniProtKB-KW"/>
</dbReference>
<dbReference type="Gene3D" id="2.40.128.50">
    <property type="match status" value="2"/>
</dbReference>
<dbReference type="Gene3D" id="3.40.710.10">
    <property type="entry name" value="DD-peptidase/beta-lactamase superfamily"/>
    <property type="match status" value="1"/>
</dbReference>
<dbReference type="HAMAP" id="MF_01960">
    <property type="entry name" value="D_aminopeptidase"/>
    <property type="match status" value="1"/>
</dbReference>
<dbReference type="InterPro" id="IPR050491">
    <property type="entry name" value="Bact_CellWall_Synth/Modif"/>
</dbReference>
<dbReference type="InterPro" id="IPR001466">
    <property type="entry name" value="Beta-lactam-related"/>
</dbReference>
<dbReference type="InterPro" id="IPR012338">
    <property type="entry name" value="Beta-lactam/transpept-like"/>
</dbReference>
<dbReference type="InterPro" id="IPR027279">
    <property type="entry name" value="D_amino_pept/lipop_sf"/>
</dbReference>
<dbReference type="InterPro" id="IPR023645">
    <property type="entry name" value="DAP"/>
</dbReference>
<dbReference type="InterPro" id="IPR012856">
    <property type="entry name" value="DAP_B_dom"/>
</dbReference>
<dbReference type="NCBIfam" id="NF009622">
    <property type="entry name" value="PRK13128.1"/>
    <property type="match status" value="1"/>
</dbReference>
<dbReference type="PANTHER" id="PTHR46825:SF9">
    <property type="entry name" value="BETA-LACTAMASE-RELATED DOMAIN-CONTAINING PROTEIN"/>
    <property type="match status" value="1"/>
</dbReference>
<dbReference type="PANTHER" id="PTHR46825">
    <property type="entry name" value="D-ALANYL-D-ALANINE-CARBOXYPEPTIDASE/ENDOPEPTIDASE AMPH"/>
    <property type="match status" value="1"/>
</dbReference>
<dbReference type="Pfam" id="PF00144">
    <property type="entry name" value="Beta-lactamase"/>
    <property type="match status" value="1"/>
</dbReference>
<dbReference type="Pfam" id="PF07930">
    <property type="entry name" value="DAP_B"/>
    <property type="match status" value="1"/>
</dbReference>
<dbReference type="SUPFAM" id="SSF56601">
    <property type="entry name" value="beta-lactamase/transpeptidase-like"/>
    <property type="match status" value="1"/>
</dbReference>
<dbReference type="SUPFAM" id="SSF50886">
    <property type="entry name" value="D-aminopeptidase, middle and C-terminal domains"/>
    <property type="match status" value="2"/>
</dbReference>
<protein>
    <recommendedName>
        <fullName evidence="1">D-aminopeptidase</fullName>
        <ecNumber evidence="1">3.4.11.19</ecNumber>
    </recommendedName>
</protein>
<reference key="1">
    <citation type="journal article" date="2002" name="Proc. Natl. Acad. Sci. U.S.A.">
        <title>The Brucella suis genome reveals fundamental similarities between animal and plant pathogens and symbionts.</title>
        <authorList>
            <person name="Paulsen I.T."/>
            <person name="Seshadri R."/>
            <person name="Nelson K.E."/>
            <person name="Eisen J.A."/>
            <person name="Heidelberg J.F."/>
            <person name="Read T.D."/>
            <person name="Dodson R.J."/>
            <person name="Umayam L.A."/>
            <person name="Brinkac L.M."/>
            <person name="Beanan M.J."/>
            <person name="Daugherty S.C."/>
            <person name="DeBoy R.T."/>
            <person name="Durkin A.S."/>
            <person name="Kolonay J.F."/>
            <person name="Madupu R."/>
            <person name="Nelson W.C."/>
            <person name="Ayodeji B."/>
            <person name="Kraul M."/>
            <person name="Shetty J."/>
            <person name="Malek J.A."/>
            <person name="Van Aken S.E."/>
            <person name="Riedmuller S."/>
            <person name="Tettelin H."/>
            <person name="Gill S.R."/>
            <person name="White O."/>
            <person name="Salzberg S.L."/>
            <person name="Hoover D.L."/>
            <person name="Lindler L.E."/>
            <person name="Halling S.M."/>
            <person name="Boyle S.M."/>
            <person name="Fraser C.M."/>
        </authorList>
    </citation>
    <scope>NUCLEOTIDE SEQUENCE [LARGE SCALE GENOMIC DNA]</scope>
    <source>
        <strain>1330</strain>
    </source>
</reference>
<reference key="2">
    <citation type="journal article" date="2011" name="J. Bacteriol.">
        <title>Revised genome sequence of Brucella suis 1330.</title>
        <authorList>
            <person name="Tae H."/>
            <person name="Shallom S."/>
            <person name="Settlage R."/>
            <person name="Preston D."/>
            <person name="Adams L.G."/>
            <person name="Garner H.R."/>
        </authorList>
    </citation>
    <scope>NUCLEOTIDE SEQUENCE [LARGE SCALE GENOMIC DNA]</scope>
    <source>
        <strain>1330</strain>
    </source>
</reference>